<gene>
    <name evidence="1" type="primary">rpo1C</name>
    <name evidence="1" type="synonym">rpoA2</name>
    <name type="ordered locus">PF1562</name>
</gene>
<sequence length="397" mass="44404">MVSLSTIKSLIEKKGANLPENVKSELYEKLKKYNEKYKLTKAEIEAIIDDVVKEYERALVEPGEPVGTVAAQSIGEPSTQMTLNTFHYAGVAEINVTLGLPRIIEIVDARKNPSTPMMTVYLDEEHRYDRAKAEEVARRIEGTTLENLARSTTLDLINFEFIVEIDPERLERSGLTMEKVVKKLESSFKSAEFEVDGYTLIVRPKKADKISDLRRFAEKIKKHRLKGLSGVGKTIVRKEGDEYVIYTEGSNFKQVLKVPGVDPTRTRTNNIHEIAEVLGIEAARNAIIDEIVSTMQEQGLEVDIRHIMLVADMMTLDGIVRPIGRHGVVGEKSSVLARAAFEITVQHLFEAAEKGEVDNLNGVIENVLIGQPVPVGTGMVKLTMKLPLRPQKEKEEV</sequence>
<protein>
    <recommendedName>
        <fullName evidence="1">DNA-directed RNA polymerase subunit Rpo1C</fullName>
        <ecNumber evidence="1">2.7.7.6</ecNumber>
    </recommendedName>
    <alternativeName>
        <fullName evidence="1 3">DNA-directed RNA polymerase subunit A''</fullName>
    </alternativeName>
</protein>
<proteinExistence type="evidence at protein level"/>
<keyword id="KW-0002">3D-structure</keyword>
<keyword id="KW-0963">Cytoplasm</keyword>
<keyword id="KW-0238">DNA-binding</keyword>
<keyword id="KW-0240">DNA-directed RNA polymerase</keyword>
<keyword id="KW-0548">Nucleotidyltransferase</keyword>
<keyword id="KW-1185">Reference proteome</keyword>
<keyword id="KW-0804">Transcription</keyword>
<keyword id="KW-0808">Transferase</keyword>
<feature type="chain" id="PRO_0000074022" description="DNA-directed RNA polymerase subunit Rpo1C">
    <location>
        <begin position="1"/>
        <end position="397"/>
    </location>
</feature>
<feature type="helix" evidence="7">
    <location>
        <begin position="4"/>
        <end position="14"/>
    </location>
</feature>
<feature type="strand" evidence="7">
    <location>
        <begin position="16"/>
        <end position="18"/>
    </location>
</feature>
<feature type="helix" evidence="7">
    <location>
        <begin position="20"/>
        <end position="36"/>
    </location>
</feature>
<feature type="helix" evidence="7">
    <location>
        <begin position="41"/>
        <end position="57"/>
    </location>
</feature>
<feature type="helix" evidence="7">
    <location>
        <begin position="66"/>
        <end position="75"/>
    </location>
</feature>
<feature type="helix" evidence="7">
    <location>
        <begin position="77"/>
        <end position="79"/>
    </location>
</feature>
<feature type="strand" evidence="5">
    <location>
        <begin position="90"/>
        <end position="92"/>
    </location>
</feature>
<feature type="helix" evidence="7">
    <location>
        <begin position="100"/>
        <end position="108"/>
    </location>
</feature>
<feature type="strand" evidence="7">
    <location>
        <begin position="117"/>
        <end position="122"/>
    </location>
</feature>
<feature type="turn" evidence="7">
    <location>
        <begin position="125"/>
        <end position="127"/>
    </location>
</feature>
<feature type="helix" evidence="7">
    <location>
        <begin position="130"/>
        <end position="140"/>
    </location>
</feature>
<feature type="helix" evidence="7">
    <location>
        <begin position="145"/>
        <end position="148"/>
    </location>
</feature>
<feature type="strand" evidence="7">
    <location>
        <begin position="149"/>
        <end position="155"/>
    </location>
</feature>
<feature type="turn" evidence="7">
    <location>
        <begin position="156"/>
        <end position="159"/>
    </location>
</feature>
<feature type="strand" evidence="7">
    <location>
        <begin position="160"/>
        <end position="165"/>
    </location>
</feature>
<feature type="helix" evidence="7">
    <location>
        <begin position="167"/>
        <end position="173"/>
    </location>
</feature>
<feature type="helix" evidence="7">
    <location>
        <begin position="177"/>
        <end position="187"/>
    </location>
</feature>
<feature type="strand" evidence="5">
    <location>
        <begin position="188"/>
        <end position="191"/>
    </location>
</feature>
<feature type="strand" evidence="5">
    <location>
        <begin position="194"/>
        <end position="196"/>
    </location>
</feature>
<feature type="strand" evidence="7">
    <location>
        <begin position="197"/>
        <end position="201"/>
    </location>
</feature>
<feature type="helix" evidence="7">
    <location>
        <begin position="205"/>
        <end position="208"/>
    </location>
</feature>
<feature type="strand" evidence="6">
    <location>
        <begin position="209"/>
        <end position="213"/>
    </location>
</feature>
<feature type="helix" evidence="7">
    <location>
        <begin position="214"/>
        <end position="222"/>
    </location>
</feature>
<feature type="strand" evidence="7">
    <location>
        <begin position="224"/>
        <end position="227"/>
    </location>
</feature>
<feature type="strand" evidence="7">
    <location>
        <begin position="234"/>
        <end position="239"/>
    </location>
</feature>
<feature type="strand" evidence="7">
    <location>
        <begin position="242"/>
        <end position="249"/>
    </location>
</feature>
<feature type="helix" evidence="7">
    <location>
        <begin position="252"/>
        <end position="255"/>
    </location>
</feature>
<feature type="turn" evidence="7">
    <location>
        <begin position="263"/>
        <end position="265"/>
    </location>
</feature>
<feature type="strand" evidence="7">
    <location>
        <begin position="267"/>
        <end position="269"/>
    </location>
</feature>
<feature type="helix" evidence="7">
    <location>
        <begin position="271"/>
        <end position="277"/>
    </location>
</feature>
<feature type="helix" evidence="7">
    <location>
        <begin position="280"/>
        <end position="298"/>
    </location>
</feature>
<feature type="helix" evidence="7">
    <location>
        <begin position="304"/>
        <end position="314"/>
    </location>
</feature>
<feature type="turn" evidence="7">
    <location>
        <begin position="315"/>
        <end position="317"/>
    </location>
</feature>
<feature type="turn" evidence="7">
    <location>
        <begin position="325"/>
        <end position="328"/>
    </location>
</feature>
<feature type="helix" evidence="7">
    <location>
        <begin position="329"/>
        <end position="331"/>
    </location>
</feature>
<feature type="helix" evidence="7">
    <location>
        <begin position="335"/>
        <end position="341"/>
    </location>
</feature>
<feature type="helix" evidence="7">
    <location>
        <begin position="344"/>
        <end position="354"/>
    </location>
</feature>
<feature type="strand" evidence="4">
    <location>
        <begin position="357"/>
        <end position="359"/>
    </location>
</feature>
<feature type="helix" evidence="7">
    <location>
        <begin position="363"/>
        <end position="369"/>
    </location>
</feature>
<feature type="helix" evidence="7">
    <location>
        <begin position="376"/>
        <end position="379"/>
    </location>
</feature>
<feature type="strand" evidence="7">
    <location>
        <begin position="381"/>
        <end position="384"/>
    </location>
</feature>
<organism>
    <name type="scientific">Pyrococcus furiosus (strain ATCC 43587 / DSM 3638 / JCM 8422 / Vc1)</name>
    <dbReference type="NCBI Taxonomy" id="186497"/>
    <lineage>
        <taxon>Archaea</taxon>
        <taxon>Methanobacteriati</taxon>
        <taxon>Methanobacteriota</taxon>
        <taxon>Thermococci</taxon>
        <taxon>Thermococcales</taxon>
        <taxon>Thermococcaceae</taxon>
        <taxon>Pyrococcus</taxon>
    </lineage>
</organism>
<comment type="function">
    <text evidence="1 2">DNA-dependent RNA polymerase (RNAP) catalyzes the transcription of DNA into RNA using the four ribonucleoside triphosphates as substrates. Forms part of the jaw domain.</text>
</comment>
<comment type="catalytic activity">
    <reaction evidence="1">
        <text>RNA(n) + a ribonucleoside 5'-triphosphate = RNA(n+1) + diphosphate</text>
        <dbReference type="Rhea" id="RHEA:21248"/>
        <dbReference type="Rhea" id="RHEA-COMP:14527"/>
        <dbReference type="Rhea" id="RHEA-COMP:17342"/>
        <dbReference type="ChEBI" id="CHEBI:33019"/>
        <dbReference type="ChEBI" id="CHEBI:61557"/>
        <dbReference type="ChEBI" id="CHEBI:140395"/>
        <dbReference type="EC" id="2.7.7.6"/>
    </reaction>
</comment>
<comment type="subunit">
    <text evidence="2">Part of the RNA polymerase complex (PubMed:21386817). An artificial construct of the RNAP clamp domain (including part of this protein) contacts transcription elongation factors Spt4 and Spt5 (PubMed:21386817).</text>
</comment>
<comment type="subcellular location">
    <subcellularLocation>
        <location evidence="1">Cytoplasm</location>
    </subcellularLocation>
</comment>
<comment type="similarity">
    <text evidence="1">Belongs to the RNA polymerase beta' chain family.</text>
</comment>
<name>RPO1C_PYRFU</name>
<reference key="1">
    <citation type="journal article" date="1999" name="Genetics">
        <title>Divergence of the hyperthermophilic archaea Pyrococcus furiosus and P. horikoshii inferred from complete genomic sequences.</title>
        <authorList>
            <person name="Maeder D.L."/>
            <person name="Weiss R.B."/>
            <person name="Dunn D.M."/>
            <person name="Cherry J.L."/>
            <person name="Gonzalez J.M."/>
            <person name="DiRuggiero J."/>
            <person name="Robb F.T."/>
        </authorList>
    </citation>
    <scope>NUCLEOTIDE SEQUENCE [LARGE SCALE GENOMIC DNA]</scope>
    <source>
        <strain>ATCC 43587 / DSM 3638 / JCM 8422 / Vc1</strain>
    </source>
</reference>
<reference key="2">
    <citation type="journal article" date="2011" name="EMBO J.">
        <title>Architecture of the RNA polymerase-Spt4/5 complex and basis of universal transcription processivity.</title>
        <authorList>
            <person name="Martinez-Rucobo F.W."/>
            <person name="Sainsbury S."/>
            <person name="Cheung A.C."/>
            <person name="Cramer P."/>
        </authorList>
    </citation>
    <scope>X-RAY CRYSTALLOGRAPHY (3.30 ANGSTROMS) OF 334-371 IN COMPLEX WITH SPT4 AND SPT5</scope>
</reference>
<accession>Q8U0M5</accession>
<evidence type="ECO:0000255" key="1">
    <source>
        <dbReference type="HAMAP-Rule" id="MF_00411"/>
    </source>
</evidence>
<evidence type="ECO:0000269" key="2">
    <source>
    </source>
</evidence>
<evidence type="ECO:0000303" key="3">
    <source>
    </source>
</evidence>
<evidence type="ECO:0007829" key="4">
    <source>
        <dbReference type="PDB" id="3QQC"/>
    </source>
</evidence>
<evidence type="ECO:0007829" key="5">
    <source>
        <dbReference type="PDB" id="8CRO"/>
    </source>
</evidence>
<evidence type="ECO:0007829" key="6">
    <source>
        <dbReference type="PDB" id="8P2I"/>
    </source>
</evidence>
<evidence type="ECO:0007829" key="7">
    <source>
        <dbReference type="PDB" id="8RBO"/>
    </source>
</evidence>
<dbReference type="EC" id="2.7.7.6" evidence="1"/>
<dbReference type="EMBL" id="AE009950">
    <property type="protein sequence ID" value="AAL81686.1"/>
    <property type="molecule type" value="Genomic_DNA"/>
</dbReference>
<dbReference type="RefSeq" id="WP_011012708.1">
    <property type="nucleotide sequence ID" value="NZ_CP023154.1"/>
</dbReference>
<dbReference type="PDB" id="3QQC">
    <property type="method" value="X-ray"/>
    <property type="resolution" value="3.30 A"/>
    <property type="chains" value="A=334-371"/>
</dbReference>
<dbReference type="PDB" id="8CRO">
    <property type="method" value="EM"/>
    <property type="resolution" value="3.10 A"/>
    <property type="chains" value="C=1-397"/>
</dbReference>
<dbReference type="PDB" id="8OKI">
    <property type="method" value="EM"/>
    <property type="resolution" value="3.45 A"/>
    <property type="chains" value="C=1-397"/>
</dbReference>
<dbReference type="PDB" id="8ORQ">
    <property type="method" value="EM"/>
    <property type="resolution" value="3.20 A"/>
    <property type="chains" value="C=1-397"/>
</dbReference>
<dbReference type="PDB" id="8P2I">
    <property type="method" value="EM"/>
    <property type="resolution" value="3.40 A"/>
    <property type="chains" value="C=1-397"/>
</dbReference>
<dbReference type="PDB" id="8RBO">
    <property type="method" value="EM"/>
    <property type="resolution" value="3.02 A"/>
    <property type="chains" value="C=1-397"/>
</dbReference>
<dbReference type="PDBsum" id="3QQC"/>
<dbReference type="PDBsum" id="8CRO"/>
<dbReference type="PDBsum" id="8OKI"/>
<dbReference type="PDBsum" id="8ORQ"/>
<dbReference type="PDBsum" id="8P2I"/>
<dbReference type="PDBsum" id="8RBO"/>
<dbReference type="EMDB" id="EMD-16809"/>
<dbReference type="EMDB" id="EMD-16929"/>
<dbReference type="EMDB" id="EMD-17130"/>
<dbReference type="EMDB" id="EMD-17366"/>
<dbReference type="EMDB" id="EMD-19033"/>
<dbReference type="SMR" id="Q8U0M5"/>
<dbReference type="IntAct" id="Q8U0M5">
    <property type="interactions" value="1"/>
</dbReference>
<dbReference type="MINT" id="Q8U0M5"/>
<dbReference type="STRING" id="186497.PF1562"/>
<dbReference type="PaxDb" id="186497-PF1562"/>
<dbReference type="GeneID" id="41713383"/>
<dbReference type="KEGG" id="pfu:PF1562"/>
<dbReference type="PATRIC" id="fig|186497.12.peg.1628"/>
<dbReference type="eggNOG" id="arCOG04256">
    <property type="taxonomic scope" value="Archaea"/>
</dbReference>
<dbReference type="HOGENOM" id="CLU_037097_1_0_2"/>
<dbReference type="OrthoDB" id="372142at2157"/>
<dbReference type="PhylomeDB" id="Q8U0M5"/>
<dbReference type="EvolutionaryTrace" id="Q8U0M5"/>
<dbReference type="Proteomes" id="UP000001013">
    <property type="component" value="Chromosome"/>
</dbReference>
<dbReference type="GO" id="GO:0005737">
    <property type="term" value="C:cytoplasm"/>
    <property type="evidence" value="ECO:0007669"/>
    <property type="project" value="UniProtKB-SubCell"/>
</dbReference>
<dbReference type="GO" id="GO:0000428">
    <property type="term" value="C:DNA-directed RNA polymerase complex"/>
    <property type="evidence" value="ECO:0007669"/>
    <property type="project" value="UniProtKB-KW"/>
</dbReference>
<dbReference type="GO" id="GO:0003677">
    <property type="term" value="F:DNA binding"/>
    <property type="evidence" value="ECO:0007669"/>
    <property type="project" value="UniProtKB-UniRule"/>
</dbReference>
<dbReference type="GO" id="GO:0003899">
    <property type="term" value="F:DNA-directed RNA polymerase activity"/>
    <property type="evidence" value="ECO:0007669"/>
    <property type="project" value="UniProtKB-UniRule"/>
</dbReference>
<dbReference type="GO" id="GO:0006351">
    <property type="term" value="P:DNA-templated transcription"/>
    <property type="evidence" value="ECO:0007669"/>
    <property type="project" value="UniProtKB-UniRule"/>
</dbReference>
<dbReference type="CDD" id="cd06528">
    <property type="entry name" value="RNAP_A"/>
    <property type="match status" value="1"/>
</dbReference>
<dbReference type="Gene3D" id="1.10.150.390">
    <property type="match status" value="1"/>
</dbReference>
<dbReference type="HAMAP" id="MF_00411">
    <property type="entry name" value="RNApol_arch_Rpo1C"/>
    <property type="match status" value="1"/>
</dbReference>
<dbReference type="InterPro" id="IPR045867">
    <property type="entry name" value="DNA-dir_RpoC_beta_prime"/>
</dbReference>
<dbReference type="InterPro" id="IPR007081">
    <property type="entry name" value="RNA_pol_Rpb1_5"/>
</dbReference>
<dbReference type="InterPro" id="IPR012757">
    <property type="entry name" value="RPO1C"/>
</dbReference>
<dbReference type="NCBIfam" id="TIGR02389">
    <property type="entry name" value="RNA_pol_rpoA2"/>
    <property type="match status" value="1"/>
</dbReference>
<dbReference type="PANTHER" id="PTHR19376">
    <property type="entry name" value="DNA-DIRECTED RNA POLYMERASE"/>
    <property type="match status" value="1"/>
</dbReference>
<dbReference type="PANTHER" id="PTHR19376:SF32">
    <property type="entry name" value="DNA-DIRECTED RNA POLYMERASE III SUBUNIT RPC1"/>
    <property type="match status" value="1"/>
</dbReference>
<dbReference type="Pfam" id="PF04998">
    <property type="entry name" value="RNA_pol_Rpb1_5"/>
    <property type="match status" value="1"/>
</dbReference>
<dbReference type="SUPFAM" id="SSF64484">
    <property type="entry name" value="beta and beta-prime subunits of DNA dependent RNA-polymerase"/>
    <property type="match status" value="1"/>
</dbReference>